<gene>
    <name evidence="4" type="primary">terM</name>
</gene>
<evidence type="ECO:0000250" key="1">
    <source>
        <dbReference type="UniProtKB" id="B8M9J8"/>
    </source>
</evidence>
<evidence type="ECO:0000255" key="2"/>
<evidence type="ECO:0000269" key="3">
    <source>
    </source>
</evidence>
<evidence type="ECO:0000303" key="4">
    <source>
    </source>
</evidence>
<evidence type="ECO:0000305" key="5"/>
<evidence type="ECO:0000305" key="6">
    <source>
    </source>
</evidence>
<protein>
    <recommendedName>
        <fullName evidence="4">FAD-dependent monooxygeanse terM</fullName>
        <ecNumber evidence="6">1.-.-.-</ecNumber>
    </recommendedName>
    <alternativeName>
        <fullName evidence="4">Terpendoles biosynthesis cluster protein M</fullName>
    </alternativeName>
</protein>
<keyword id="KW-0274">FAD</keyword>
<keyword id="KW-0285">Flavoprotein</keyword>
<keyword id="KW-0472">Membrane</keyword>
<keyword id="KW-0503">Monooxygenase</keyword>
<keyword id="KW-0560">Oxidoreductase</keyword>
<keyword id="KW-0732">Signal</keyword>
<keyword id="KW-0812">Transmembrane</keyword>
<keyword id="KW-1133">Transmembrane helix</keyword>
<comment type="function">
    <text evidence="3 6">FAD-dependent monooxygeanse; part of the gene cluster that mediates the biosynthesis of terpendoles, indole-diterpene (IDT) mycotoxins including terpendole I, terpendole K, terpendole C, as well as the kinesin Eg5 inhibitor terpendole E (PubMed:23261604). Terpendoles biosynthesis begins with the synthesis of geranylgeranyl diphosphate (GGPP) by a yet unidentified GGPP synthase. Condensation of indole-3-glycerol phosphate with GGPP by the prenyltransferase terC then forms 3-geranylgeranylindole (3-GGI), followed by epoxidation and cyclization of this intermediate (by the FAD-dependent monooxygeanse terM and the terpene cyclase terB) to form paspaline. The cytochrome monooxygenase terQ then hydroxylates paspalline at C-11 to yield terpendole E. The cytochrome monooxygenase terP converts terpendole E to 13-desoxyterpendole I, and terQ converts 13-desoxyterpendole I into terpendole I. TerF and terK are required for conversion of terpendole I to terpendole C which is further converted to terpendole K (Probable).</text>
</comment>
<comment type="cofactor">
    <cofactor evidence="5">
        <name>FAD</name>
        <dbReference type="ChEBI" id="CHEBI:57692"/>
    </cofactor>
</comment>
<comment type="pathway">
    <text evidence="3">Secondary metabolite biosynthesis.</text>
</comment>
<comment type="subcellular location">
    <subcellularLocation>
        <location evidence="2">Membrane</location>
        <topology evidence="2">Single-pass membrane protein</topology>
    </subcellularLocation>
</comment>
<comment type="disruption phenotype">
    <text evidence="3">The disruption of the whole terpendoles biosynthesis cluster abolishes the terpendoles production.</text>
</comment>
<comment type="similarity">
    <text evidence="5">Belongs to the paxM FAD-dependent monooxygenase family.</text>
</comment>
<proteinExistence type="inferred from homology"/>
<organism>
    <name type="scientific">Tolypocladium album</name>
    <name type="common">Soil fungus</name>
    <name type="synonym">Chaunopycnis alba</name>
    <dbReference type="NCBI Taxonomy" id="124418"/>
    <lineage>
        <taxon>Eukaryota</taxon>
        <taxon>Fungi</taxon>
        <taxon>Dikarya</taxon>
        <taxon>Ascomycota</taxon>
        <taxon>Pezizomycotina</taxon>
        <taxon>Sordariomycetes</taxon>
        <taxon>Hypocreomycetidae</taxon>
        <taxon>Hypocreales</taxon>
        <taxon>Ophiocordycipitaceae</taxon>
        <taxon>Tolypocladium</taxon>
    </lineage>
</organism>
<accession>M1VE36</accession>
<feature type="signal peptide" evidence="2">
    <location>
        <begin position="1"/>
        <end position="22"/>
    </location>
</feature>
<feature type="chain" id="PRO_0000460264" description="FAD-dependent monooxygeanse terM">
    <location>
        <begin position="23"/>
        <end position="473"/>
    </location>
</feature>
<feature type="transmembrane region" description="Helical" evidence="2">
    <location>
        <begin position="441"/>
        <end position="461"/>
    </location>
</feature>
<feature type="binding site" evidence="1">
    <location>
        <position position="34"/>
    </location>
    <ligand>
        <name>FAD</name>
        <dbReference type="ChEBI" id="CHEBI:57692"/>
    </ligand>
</feature>
<feature type="binding site" evidence="1">
    <location>
        <position position="48"/>
    </location>
    <ligand>
        <name>FAD</name>
        <dbReference type="ChEBI" id="CHEBI:57692"/>
    </ligand>
</feature>
<feature type="binding site" evidence="1">
    <location>
        <position position="107"/>
    </location>
    <ligand>
        <name>FAD</name>
        <dbReference type="ChEBI" id="CHEBI:57692"/>
    </ligand>
</feature>
<feature type="binding site" evidence="1">
    <location>
        <position position="303"/>
    </location>
    <ligand>
        <name>FAD</name>
        <dbReference type="ChEBI" id="CHEBI:57692"/>
    </ligand>
</feature>
<feature type="binding site" evidence="1">
    <location>
        <position position="316"/>
    </location>
    <ligand>
        <name>FAD</name>
        <dbReference type="ChEBI" id="CHEBI:57692"/>
    </ligand>
</feature>
<dbReference type="EC" id="1.-.-.-" evidence="6"/>
<dbReference type="EMBL" id="AB725916">
    <property type="protein sequence ID" value="BAM84049.1"/>
    <property type="molecule type" value="Genomic_DNA"/>
</dbReference>
<dbReference type="SMR" id="M1VE36"/>
<dbReference type="GO" id="GO:0016020">
    <property type="term" value="C:membrane"/>
    <property type="evidence" value="ECO:0007669"/>
    <property type="project" value="UniProtKB-SubCell"/>
</dbReference>
<dbReference type="GO" id="GO:0071949">
    <property type="term" value="F:FAD binding"/>
    <property type="evidence" value="ECO:0007669"/>
    <property type="project" value="InterPro"/>
</dbReference>
<dbReference type="GO" id="GO:0004497">
    <property type="term" value="F:monooxygenase activity"/>
    <property type="evidence" value="ECO:0007669"/>
    <property type="project" value="UniProtKB-KW"/>
</dbReference>
<dbReference type="Gene3D" id="3.50.50.60">
    <property type="entry name" value="FAD/NAD(P)-binding domain"/>
    <property type="match status" value="1"/>
</dbReference>
<dbReference type="InterPro" id="IPR002938">
    <property type="entry name" value="FAD-bd"/>
</dbReference>
<dbReference type="InterPro" id="IPR036188">
    <property type="entry name" value="FAD/NAD-bd_sf"/>
</dbReference>
<dbReference type="InterPro" id="IPR050562">
    <property type="entry name" value="FAD_mOase_fung"/>
</dbReference>
<dbReference type="PANTHER" id="PTHR47356:SF2">
    <property type="entry name" value="FAD-BINDING DOMAIN-CONTAINING PROTEIN-RELATED"/>
    <property type="match status" value="1"/>
</dbReference>
<dbReference type="PANTHER" id="PTHR47356">
    <property type="entry name" value="FAD-DEPENDENT MONOOXYGENASE ASQG-RELATED"/>
    <property type="match status" value="1"/>
</dbReference>
<dbReference type="Pfam" id="PF01494">
    <property type="entry name" value="FAD_binding_3"/>
    <property type="match status" value="1"/>
</dbReference>
<dbReference type="PRINTS" id="PR00420">
    <property type="entry name" value="RNGMNOXGNASE"/>
</dbReference>
<dbReference type="SUPFAM" id="SSF51905">
    <property type="entry name" value="FAD/NAD(P)-binding domain"/>
    <property type="match status" value="1"/>
</dbReference>
<reference key="1">
    <citation type="journal article" date="2012" name="Chem. Biol.">
        <title>Terpendole E, a kinesin Eg5 inhibitor, is a key biosynthetic intermediate of indole-diterpenes in the producing fungus Chaunopycnis alba.</title>
        <authorList>
            <person name="Motoyama T."/>
            <person name="Hayashi T."/>
            <person name="Hirota H."/>
            <person name="Ueki M."/>
            <person name="Osada H."/>
        </authorList>
    </citation>
    <scope>NUCLEOTIDE SEQUENCE [GENOMIC DNA]</scope>
    <scope>FUNCTION</scope>
    <scope>DISRUPTION PHENOTYPE</scope>
    <scope>PATHWAY</scope>
    <source>
        <strain>RK99-F33</strain>
    </source>
</reference>
<sequence length="473" mass="53038">MSENFKVLIIGGSVAGLTLALCLEKLDISYEILEQGEDISPQVGASIGIMPNGSPVLDQLGVFDDVERVIEPLEFARIRYPDGFFFQSQYPAIIADHFGYPISFLERQKFLQILYSKIRYKERVHTGQKAVRIESHESHVVVRTADKQYSGHLVVGADGVHSIVRSEIWRLSEPGAITDEEKTALRVEYACVYGISSGVRGVTDGVQLSLLDHGVTIHVFNGKAGKVFWFVIIKIDKRYSYTDMPRFSTQDAREICESLKSKLLDTSVSFGDLWAKCDIFMMTPLEEGHFQTWHRGRLVCVGDAVRKLTPNIGQGANMAIEDIAVLANALFRANVRDGLPDDRQIDDVLSQLSATRLPATKTTCKQSEFLTRLQAGDGIWRRLAARYIFPALHDIPAASSARVLKGGQRLDFVDPPQRARPELDRWAWVKDLRGYVPRPHVLYLICGALLAWWASGLVWHFPSKLDTTILSHV</sequence>
<name>TERM_TOLAL</name>